<reference key="1">
    <citation type="journal article" date="1992" name="Nucleic Acids Res.">
        <title>Nucleotide sequence of the genes encoding the subunits H, B, A' and A'' of the DNA-dependent RNA polymerase and the initiator tRNA from Thermoplasma acidophilum.</title>
        <authorList>
            <person name="Klenk H.-P."/>
            <person name="Renner O."/>
            <person name="Schwass V."/>
            <person name="Zillig W."/>
        </authorList>
    </citation>
    <scope>NUCLEOTIDE SEQUENCE [GENOMIC DNA]</scope>
    <source>
        <strain>ATCC 25905 / DSM 1728 / JCM 9062 / NBRC 15155 / AMRC-C165</strain>
    </source>
</reference>
<reference key="2">
    <citation type="journal article" date="2000" name="Nature">
        <title>The genome sequence of the thermoacidophilic scavenger Thermoplasma acidophilum.</title>
        <authorList>
            <person name="Ruepp A."/>
            <person name="Graml W."/>
            <person name="Santos-Martinez M.-L."/>
            <person name="Koretke K.K."/>
            <person name="Volker C."/>
            <person name="Mewes H.-W."/>
            <person name="Frishman D."/>
            <person name="Stocker S."/>
            <person name="Lupas A.N."/>
            <person name="Baumeister W."/>
        </authorList>
    </citation>
    <scope>NUCLEOTIDE SEQUENCE [LARGE SCALE GENOMIC DNA]</scope>
    <source>
        <strain>ATCC 25905 / DSM 1728 / JCM 9062 / NBRC 15155 / AMRC-C165</strain>
    </source>
</reference>
<proteinExistence type="inferred from homology"/>
<name>RPO5_THEAC</name>
<comment type="function">
    <text evidence="1">DNA-dependent RNA polymerase (RNAP) catalyzes the transcription of DNA into RNA using the four ribonucleoside triphosphates as substrates.</text>
</comment>
<comment type="catalytic activity">
    <reaction evidence="1">
        <text>RNA(n) + a ribonucleoside 5'-triphosphate = RNA(n+1) + diphosphate</text>
        <dbReference type="Rhea" id="RHEA:21248"/>
        <dbReference type="Rhea" id="RHEA-COMP:14527"/>
        <dbReference type="Rhea" id="RHEA-COMP:17342"/>
        <dbReference type="ChEBI" id="CHEBI:33019"/>
        <dbReference type="ChEBI" id="CHEBI:61557"/>
        <dbReference type="ChEBI" id="CHEBI:140395"/>
        <dbReference type="EC" id="2.7.7.6"/>
    </reaction>
</comment>
<comment type="subunit">
    <text evidence="1">Part of the RNA polymerase complex.</text>
</comment>
<comment type="subcellular location">
    <subcellularLocation>
        <location evidence="1">Cytoplasm</location>
    </subcellularLocation>
</comment>
<comment type="similarity">
    <text evidence="1">Belongs to the archaeal Rpo5/eukaryotic RPB5 RNA polymerase subunit family.</text>
</comment>
<comment type="sequence caution" evidence="2">
    <conflict type="erroneous initiation">
        <sequence resource="EMBL-CDS" id="CAC11533"/>
    </conflict>
    <text>Extended N-terminus.</text>
</comment>
<dbReference type="EC" id="2.7.7.6" evidence="1"/>
<dbReference type="EMBL" id="X68198">
    <property type="protein sequence ID" value="CAA48279.1"/>
    <property type="molecule type" value="Genomic_DNA"/>
</dbReference>
<dbReference type="EMBL" id="AL445064">
    <property type="protein sequence ID" value="CAC11533.1"/>
    <property type="status" value="ALT_INIT"/>
    <property type="molecule type" value="Genomic_DNA"/>
</dbReference>
<dbReference type="PIR" id="S26721">
    <property type="entry name" value="S26721"/>
</dbReference>
<dbReference type="RefSeq" id="WP_048161571.1">
    <property type="nucleotide sequence ID" value="NC_002578.1"/>
</dbReference>
<dbReference type="SMR" id="Q03588"/>
<dbReference type="FunCoup" id="Q03588">
    <property type="interactions" value="7"/>
</dbReference>
<dbReference type="STRING" id="273075.gene:9571609"/>
<dbReference type="PaxDb" id="273075-Ta0389"/>
<dbReference type="EnsemblBacteria" id="CAC11533">
    <property type="protein sequence ID" value="CAC11533"/>
    <property type="gene ID" value="CAC11533"/>
</dbReference>
<dbReference type="KEGG" id="tac:Ta0389"/>
<dbReference type="eggNOG" id="arCOG04258">
    <property type="taxonomic scope" value="Archaea"/>
</dbReference>
<dbReference type="HOGENOM" id="CLU_058320_4_0_2"/>
<dbReference type="InParanoid" id="Q03588"/>
<dbReference type="OrthoDB" id="30537at2157"/>
<dbReference type="Proteomes" id="UP000001024">
    <property type="component" value="Chromosome"/>
</dbReference>
<dbReference type="GO" id="GO:0005737">
    <property type="term" value="C:cytoplasm"/>
    <property type="evidence" value="ECO:0007669"/>
    <property type="project" value="UniProtKB-SubCell"/>
</dbReference>
<dbReference type="GO" id="GO:0000428">
    <property type="term" value="C:DNA-directed RNA polymerase complex"/>
    <property type="evidence" value="ECO:0007669"/>
    <property type="project" value="UniProtKB-KW"/>
</dbReference>
<dbReference type="GO" id="GO:0003677">
    <property type="term" value="F:DNA binding"/>
    <property type="evidence" value="ECO:0007669"/>
    <property type="project" value="InterPro"/>
</dbReference>
<dbReference type="GO" id="GO:0003899">
    <property type="term" value="F:DNA-directed RNA polymerase activity"/>
    <property type="evidence" value="ECO:0007669"/>
    <property type="project" value="UniProtKB-UniRule"/>
</dbReference>
<dbReference type="GO" id="GO:0006366">
    <property type="term" value="P:transcription by RNA polymerase II"/>
    <property type="evidence" value="ECO:0007669"/>
    <property type="project" value="TreeGrafter"/>
</dbReference>
<dbReference type="GO" id="GO:0006362">
    <property type="term" value="P:transcription elongation by RNA polymerase I"/>
    <property type="evidence" value="ECO:0007669"/>
    <property type="project" value="TreeGrafter"/>
</dbReference>
<dbReference type="GO" id="GO:0042797">
    <property type="term" value="P:tRNA transcription by RNA polymerase III"/>
    <property type="evidence" value="ECO:0007669"/>
    <property type="project" value="TreeGrafter"/>
</dbReference>
<dbReference type="Gene3D" id="3.90.940.20">
    <property type="entry name" value="RPB5-like RNA polymerase subunit"/>
    <property type="match status" value="1"/>
</dbReference>
<dbReference type="HAMAP" id="MF_00025">
    <property type="entry name" value="RNApol_Rpo5_RPB5"/>
    <property type="match status" value="1"/>
</dbReference>
<dbReference type="InterPro" id="IPR014381">
    <property type="entry name" value="Arch_Rpo5/euc_Rpb5"/>
</dbReference>
<dbReference type="InterPro" id="IPR000783">
    <property type="entry name" value="RNA_pol_subH/Rpb5_C"/>
</dbReference>
<dbReference type="InterPro" id="IPR020608">
    <property type="entry name" value="RNA_pol_subH/Rpb5_CS"/>
</dbReference>
<dbReference type="InterPro" id="IPR035913">
    <property type="entry name" value="RPB5-like_sf"/>
</dbReference>
<dbReference type="NCBIfam" id="NF007129">
    <property type="entry name" value="PRK09570.1"/>
    <property type="match status" value="1"/>
</dbReference>
<dbReference type="PANTHER" id="PTHR10535">
    <property type="entry name" value="DNA-DIRECTED RNA POLYMERASES I, II, AND III SUBUNIT RPABC1"/>
    <property type="match status" value="1"/>
</dbReference>
<dbReference type="PANTHER" id="PTHR10535:SF0">
    <property type="entry name" value="DNA-DIRECTED RNA POLYMERASES I, II, AND III SUBUNIT RPABC1"/>
    <property type="match status" value="1"/>
</dbReference>
<dbReference type="Pfam" id="PF01191">
    <property type="entry name" value="RNA_pol_Rpb5_C"/>
    <property type="match status" value="1"/>
</dbReference>
<dbReference type="SUPFAM" id="SSF55287">
    <property type="entry name" value="RPB5-like RNA polymerase subunit"/>
    <property type="match status" value="1"/>
</dbReference>
<dbReference type="PROSITE" id="PS01110">
    <property type="entry name" value="RNA_POL_H_23KD"/>
    <property type="match status" value="1"/>
</dbReference>
<feature type="chain" id="PRO_0000146106" description="DNA-directed RNA polymerase subunit Rpo5">
    <location>
        <begin position="1"/>
        <end position="87"/>
    </location>
</feature>
<evidence type="ECO:0000255" key="1">
    <source>
        <dbReference type="HAMAP-Rule" id="MF_00025"/>
    </source>
</evidence>
<evidence type="ECO:0000305" key="2"/>
<keyword id="KW-0963">Cytoplasm</keyword>
<keyword id="KW-0240">DNA-directed RNA polymerase</keyword>
<keyword id="KW-0548">Nucleotidyltransferase</keyword>
<keyword id="KW-1185">Reference proteome</keyword>
<keyword id="KW-0804">Transcription</keyword>
<keyword id="KW-0808">Transferase</keyword>
<protein>
    <recommendedName>
        <fullName evidence="1">DNA-directed RNA polymerase subunit Rpo5</fullName>
        <ecNumber evidence="1">2.7.7.6</ecNumber>
    </recommendedName>
    <alternativeName>
        <fullName evidence="1">DNA-directed RNA polymerase subunit H</fullName>
    </alternativeName>
</protein>
<organism>
    <name type="scientific">Thermoplasma acidophilum (strain ATCC 25905 / DSM 1728 / JCM 9062 / NBRC 15155 / AMRC-C165)</name>
    <dbReference type="NCBI Taxonomy" id="273075"/>
    <lineage>
        <taxon>Archaea</taxon>
        <taxon>Methanobacteriati</taxon>
        <taxon>Thermoplasmatota</taxon>
        <taxon>Thermoplasmata</taxon>
        <taxon>Thermoplasmatales</taxon>
        <taxon>Thermoplasmataceae</taxon>
        <taxon>Thermoplasma</taxon>
    </lineage>
</organism>
<sequence length="87" mass="9927">MAKFNVLDHNLVPEHHIVPEEEEKNILKELNIEKEFLPKISPNDPAIKALEAVHGKIKEGTIIKIVRKSPTMGHSVYYRVVASEVFK</sequence>
<gene>
    <name evidence="1" type="primary">rpo5</name>
    <name evidence="1" type="synonym">rpoH</name>
    <name type="ordered locus">Ta0389</name>
</gene>
<accession>Q03588</accession>